<organism>
    <name type="scientific">Synechococcus sp. (strain ATCC 27144 / PCC 6301 / SAUG 1402/1)</name>
    <name type="common">Anacystis nidulans</name>
    <dbReference type="NCBI Taxonomy" id="269084"/>
    <lineage>
        <taxon>Bacteria</taxon>
        <taxon>Bacillati</taxon>
        <taxon>Cyanobacteriota</taxon>
        <taxon>Cyanophyceae</taxon>
        <taxon>Synechococcales</taxon>
        <taxon>Synechococcaceae</taxon>
        <taxon>Synechococcus</taxon>
    </lineage>
</organism>
<sequence length="185" mass="20368">MISSNDFRTGTTIEIDGAVWRVVEFLHVKPGKGSAFVRTKLKNAKTGNVVEKTFRAGETVPQAVLEKSTLQYTYKDGDDFVFMDMETYEEGRLTAATIGDRVKYLKEGMEANVITWNGQVIEVELPNSVVLEVIETDPGVKGDTATGGTKPAKVETGAQVMVPLFISVGERIKIDTRNDSYLGRE</sequence>
<protein>
    <recommendedName>
        <fullName evidence="1">Elongation factor P</fullName>
        <shortName evidence="1">EF-P</shortName>
    </recommendedName>
</protein>
<gene>
    <name evidence="1" type="primary">efp</name>
    <name type="ordered locus">syc1545_d</name>
</gene>
<keyword id="KW-0963">Cytoplasm</keyword>
<keyword id="KW-0251">Elongation factor</keyword>
<keyword id="KW-0648">Protein biosynthesis</keyword>
<proteinExistence type="inferred from homology"/>
<evidence type="ECO:0000255" key="1">
    <source>
        <dbReference type="HAMAP-Rule" id="MF_00141"/>
    </source>
</evidence>
<name>EFP_SYNP6</name>
<reference key="1">
    <citation type="journal article" date="2007" name="Photosyn. Res.">
        <title>Complete nucleotide sequence of the freshwater unicellular cyanobacterium Synechococcus elongatus PCC 6301 chromosome: gene content and organization.</title>
        <authorList>
            <person name="Sugita C."/>
            <person name="Ogata K."/>
            <person name="Shikata M."/>
            <person name="Jikuya H."/>
            <person name="Takano J."/>
            <person name="Furumichi M."/>
            <person name="Kanehisa M."/>
            <person name="Omata T."/>
            <person name="Sugiura M."/>
            <person name="Sugita M."/>
        </authorList>
    </citation>
    <scope>NUCLEOTIDE SEQUENCE [LARGE SCALE GENOMIC DNA]</scope>
    <source>
        <strain>ATCC 27144 / PCC 6301 / SAUG 1402/1</strain>
    </source>
</reference>
<feature type="chain" id="PRO_0000094351" description="Elongation factor P">
    <location>
        <begin position="1"/>
        <end position="185"/>
    </location>
</feature>
<accession>Q5N1T5</accession>
<dbReference type="EMBL" id="AP008231">
    <property type="protein sequence ID" value="BAD79735.1"/>
    <property type="molecule type" value="Genomic_DNA"/>
</dbReference>
<dbReference type="RefSeq" id="WP_011243855.1">
    <property type="nucleotide sequence ID" value="NZ_CP085785.1"/>
</dbReference>
<dbReference type="SMR" id="Q5N1T5"/>
<dbReference type="GeneID" id="72431459"/>
<dbReference type="KEGG" id="syc:syc1545_d"/>
<dbReference type="eggNOG" id="COG0231">
    <property type="taxonomic scope" value="Bacteria"/>
</dbReference>
<dbReference type="UniPathway" id="UPA00345"/>
<dbReference type="Proteomes" id="UP000001175">
    <property type="component" value="Chromosome"/>
</dbReference>
<dbReference type="GO" id="GO:0005737">
    <property type="term" value="C:cytoplasm"/>
    <property type="evidence" value="ECO:0007669"/>
    <property type="project" value="UniProtKB-SubCell"/>
</dbReference>
<dbReference type="GO" id="GO:0003746">
    <property type="term" value="F:translation elongation factor activity"/>
    <property type="evidence" value="ECO:0007669"/>
    <property type="project" value="UniProtKB-UniRule"/>
</dbReference>
<dbReference type="GO" id="GO:0043043">
    <property type="term" value="P:peptide biosynthetic process"/>
    <property type="evidence" value="ECO:0007669"/>
    <property type="project" value="InterPro"/>
</dbReference>
<dbReference type="CDD" id="cd04470">
    <property type="entry name" value="S1_EF-P_repeat_1"/>
    <property type="match status" value="1"/>
</dbReference>
<dbReference type="CDD" id="cd05794">
    <property type="entry name" value="S1_EF-P_repeat_2"/>
    <property type="match status" value="1"/>
</dbReference>
<dbReference type="FunFam" id="2.40.50.140:FF:000004">
    <property type="entry name" value="Elongation factor P"/>
    <property type="match status" value="1"/>
</dbReference>
<dbReference type="FunFam" id="2.40.50.140:FF:000009">
    <property type="entry name" value="Elongation factor P"/>
    <property type="match status" value="1"/>
</dbReference>
<dbReference type="FunFam" id="2.30.30.30:FF:000040">
    <property type="entry name" value="Organellar elongation factor P"/>
    <property type="match status" value="1"/>
</dbReference>
<dbReference type="Gene3D" id="2.30.30.30">
    <property type="match status" value="1"/>
</dbReference>
<dbReference type="Gene3D" id="2.40.50.140">
    <property type="entry name" value="Nucleic acid-binding proteins"/>
    <property type="match status" value="2"/>
</dbReference>
<dbReference type="HAMAP" id="MF_00141">
    <property type="entry name" value="EF_P"/>
    <property type="match status" value="1"/>
</dbReference>
<dbReference type="InterPro" id="IPR015365">
    <property type="entry name" value="Elong-fact-P_C"/>
</dbReference>
<dbReference type="InterPro" id="IPR012340">
    <property type="entry name" value="NA-bd_OB-fold"/>
</dbReference>
<dbReference type="InterPro" id="IPR014722">
    <property type="entry name" value="Rib_uL2_dom2"/>
</dbReference>
<dbReference type="InterPro" id="IPR020599">
    <property type="entry name" value="Transl_elong_fac_P/YeiP"/>
</dbReference>
<dbReference type="InterPro" id="IPR013185">
    <property type="entry name" value="Transl_elong_KOW-like"/>
</dbReference>
<dbReference type="InterPro" id="IPR001059">
    <property type="entry name" value="Transl_elong_P/YeiP_cen"/>
</dbReference>
<dbReference type="InterPro" id="IPR013852">
    <property type="entry name" value="Transl_elong_P/YeiP_CS"/>
</dbReference>
<dbReference type="InterPro" id="IPR011768">
    <property type="entry name" value="Transl_elongation_fac_P"/>
</dbReference>
<dbReference type="InterPro" id="IPR008991">
    <property type="entry name" value="Translation_prot_SH3-like_sf"/>
</dbReference>
<dbReference type="NCBIfam" id="TIGR00038">
    <property type="entry name" value="efp"/>
    <property type="match status" value="1"/>
</dbReference>
<dbReference type="NCBIfam" id="NF001810">
    <property type="entry name" value="PRK00529.1"/>
    <property type="match status" value="1"/>
</dbReference>
<dbReference type="PANTHER" id="PTHR30053">
    <property type="entry name" value="ELONGATION FACTOR P"/>
    <property type="match status" value="1"/>
</dbReference>
<dbReference type="PANTHER" id="PTHR30053:SF12">
    <property type="entry name" value="ELONGATION FACTOR P (EF-P) FAMILY PROTEIN"/>
    <property type="match status" value="1"/>
</dbReference>
<dbReference type="Pfam" id="PF01132">
    <property type="entry name" value="EFP"/>
    <property type="match status" value="1"/>
</dbReference>
<dbReference type="Pfam" id="PF08207">
    <property type="entry name" value="EFP_N"/>
    <property type="match status" value="1"/>
</dbReference>
<dbReference type="Pfam" id="PF09285">
    <property type="entry name" value="Elong-fact-P_C"/>
    <property type="match status" value="1"/>
</dbReference>
<dbReference type="PIRSF" id="PIRSF005901">
    <property type="entry name" value="EF-P"/>
    <property type="match status" value="1"/>
</dbReference>
<dbReference type="SMART" id="SM01185">
    <property type="entry name" value="EFP"/>
    <property type="match status" value="1"/>
</dbReference>
<dbReference type="SMART" id="SM00841">
    <property type="entry name" value="Elong-fact-P_C"/>
    <property type="match status" value="1"/>
</dbReference>
<dbReference type="SUPFAM" id="SSF50249">
    <property type="entry name" value="Nucleic acid-binding proteins"/>
    <property type="match status" value="2"/>
</dbReference>
<dbReference type="SUPFAM" id="SSF50104">
    <property type="entry name" value="Translation proteins SH3-like domain"/>
    <property type="match status" value="1"/>
</dbReference>
<dbReference type="PROSITE" id="PS01275">
    <property type="entry name" value="EFP"/>
    <property type="match status" value="1"/>
</dbReference>
<comment type="function">
    <text evidence="1">Involved in peptide bond synthesis. Stimulates efficient translation and peptide-bond synthesis on native or reconstituted 70S ribosomes in vitro. Probably functions indirectly by altering the affinity of the ribosome for aminoacyl-tRNA, thus increasing their reactivity as acceptors for peptidyl transferase.</text>
</comment>
<comment type="pathway">
    <text evidence="1">Protein biosynthesis; polypeptide chain elongation.</text>
</comment>
<comment type="subcellular location">
    <subcellularLocation>
        <location evidence="1">Cytoplasm</location>
    </subcellularLocation>
</comment>
<comment type="similarity">
    <text evidence="1">Belongs to the elongation factor P family.</text>
</comment>